<protein>
    <recommendedName>
        <fullName evidence="5">Protein STRICTOSIDINE SYNTHASE-LIKE 12</fullName>
        <shortName evidence="5">AtSSL12</shortName>
        <ecNumber>3.5.99.13</ecNumber>
    </recommendedName>
    <alternativeName>
        <fullName>Strictosidine synthase 1</fullName>
        <shortName>SS-1</shortName>
    </alternativeName>
    <alternativeName>
        <fullName evidence="6">Strictosidine synthase 13</fullName>
        <shortName evidence="6">AtSS13</shortName>
    </alternativeName>
</protein>
<proteinExistence type="evidence at transcript level"/>
<dbReference type="EC" id="3.5.99.13"/>
<dbReference type="EMBL" id="U43945">
    <property type="protein sequence ID" value="AAB40594.1"/>
    <property type="molecule type" value="mRNA"/>
</dbReference>
<dbReference type="EMBL" id="U43713">
    <property type="protein sequence ID" value="AAB40593.1"/>
    <property type="molecule type" value="Genomic_DNA"/>
</dbReference>
<dbReference type="EMBL" id="AC016662">
    <property type="protein sequence ID" value="AAG52513.1"/>
    <property type="molecule type" value="Genomic_DNA"/>
</dbReference>
<dbReference type="EMBL" id="CP002684">
    <property type="protein sequence ID" value="AEE35538.1"/>
    <property type="molecule type" value="Genomic_DNA"/>
</dbReference>
<dbReference type="EMBL" id="AY034970">
    <property type="protein sequence ID" value="AAK59475.1"/>
    <property type="molecule type" value="mRNA"/>
</dbReference>
<dbReference type="EMBL" id="AY062976">
    <property type="protein sequence ID" value="AAL34150.1"/>
    <property type="molecule type" value="mRNA"/>
</dbReference>
<dbReference type="PIR" id="A96768">
    <property type="entry name" value="A96768"/>
</dbReference>
<dbReference type="SMR" id="P94111"/>
<dbReference type="FunCoup" id="P94111">
    <property type="interactions" value="78"/>
</dbReference>
<dbReference type="STRING" id="3702.P94111"/>
<dbReference type="GlyCosmos" id="P94111">
    <property type="glycosylation" value="1 site, No reported glycans"/>
</dbReference>
<dbReference type="GlyGen" id="P94111">
    <property type="glycosylation" value="2 sites"/>
</dbReference>
<dbReference type="PaxDb" id="3702-AT1G74020.1"/>
<dbReference type="ProteomicsDB" id="228377"/>
<dbReference type="EnsemblPlants" id="AT1G74020.1">
    <property type="protein sequence ID" value="AT1G74020.1"/>
    <property type="gene ID" value="AT1G74020"/>
</dbReference>
<dbReference type="GeneID" id="843740"/>
<dbReference type="Gramene" id="AT1G74020.1">
    <property type="protein sequence ID" value="AT1G74020.1"/>
    <property type="gene ID" value="AT1G74020"/>
</dbReference>
<dbReference type="KEGG" id="ath:AT1G74020"/>
<dbReference type="Araport" id="AT1G74020"/>
<dbReference type="TAIR" id="AT1G74020">
    <property type="gene designation" value="SS2"/>
</dbReference>
<dbReference type="eggNOG" id="KOG1520">
    <property type="taxonomic scope" value="Eukaryota"/>
</dbReference>
<dbReference type="HOGENOM" id="CLU_023267_2_1_1"/>
<dbReference type="InParanoid" id="P94111"/>
<dbReference type="OMA" id="SWCDGVV"/>
<dbReference type="OrthoDB" id="5307922at2759"/>
<dbReference type="PhylomeDB" id="P94111"/>
<dbReference type="BioCyc" id="ARA:AT1G74020-MONOMER"/>
<dbReference type="UniPathway" id="UPA00311">
    <property type="reaction ID" value="UER00447"/>
</dbReference>
<dbReference type="PRO" id="PR:P94111"/>
<dbReference type="Proteomes" id="UP000006548">
    <property type="component" value="Chromosome 1"/>
</dbReference>
<dbReference type="ExpressionAtlas" id="P94111">
    <property type="expression patterns" value="baseline and differential"/>
</dbReference>
<dbReference type="GO" id="GO:0005794">
    <property type="term" value="C:Golgi apparatus"/>
    <property type="evidence" value="ECO:0007005"/>
    <property type="project" value="TAIR"/>
</dbReference>
<dbReference type="GO" id="GO:0005739">
    <property type="term" value="C:mitochondrion"/>
    <property type="evidence" value="ECO:0007005"/>
    <property type="project" value="TAIR"/>
</dbReference>
<dbReference type="GO" id="GO:0000325">
    <property type="term" value="C:plant-type vacuole"/>
    <property type="evidence" value="ECO:0007005"/>
    <property type="project" value="TAIR"/>
</dbReference>
<dbReference type="GO" id="GO:0005886">
    <property type="term" value="C:plasma membrane"/>
    <property type="evidence" value="ECO:0007005"/>
    <property type="project" value="TAIR"/>
</dbReference>
<dbReference type="GO" id="GO:0009506">
    <property type="term" value="C:plasmodesma"/>
    <property type="evidence" value="ECO:0007005"/>
    <property type="project" value="TAIR"/>
</dbReference>
<dbReference type="GO" id="GO:0016787">
    <property type="term" value="F:hydrolase activity"/>
    <property type="evidence" value="ECO:0007669"/>
    <property type="project" value="UniProtKB-KW"/>
</dbReference>
<dbReference type="GO" id="GO:0009820">
    <property type="term" value="P:alkaloid metabolic process"/>
    <property type="evidence" value="ECO:0007669"/>
    <property type="project" value="UniProtKB-KW"/>
</dbReference>
<dbReference type="GO" id="GO:0051365">
    <property type="term" value="P:cellular response to potassium ion starvation"/>
    <property type="evidence" value="ECO:0000270"/>
    <property type="project" value="UniProtKB"/>
</dbReference>
<dbReference type="GO" id="GO:0009753">
    <property type="term" value="P:response to jasmonic acid"/>
    <property type="evidence" value="ECO:0000270"/>
    <property type="project" value="TAIR"/>
</dbReference>
<dbReference type="GO" id="GO:0009611">
    <property type="term" value="P:response to wounding"/>
    <property type="evidence" value="ECO:0000270"/>
    <property type="project" value="TAIR"/>
</dbReference>
<dbReference type="FunFam" id="2.120.10.30:FF:000084">
    <property type="entry name" value="Protein STRICTOSIDINE SYNTHASE-LIKE 12"/>
    <property type="match status" value="1"/>
</dbReference>
<dbReference type="Gene3D" id="2.120.10.30">
    <property type="entry name" value="TolB, C-terminal domain"/>
    <property type="match status" value="1"/>
</dbReference>
<dbReference type="InterPro" id="IPR011042">
    <property type="entry name" value="6-blade_b-propeller_TolB-like"/>
</dbReference>
<dbReference type="InterPro" id="IPR018119">
    <property type="entry name" value="Strictosidine_synth_cons-reg"/>
</dbReference>
<dbReference type="PANTHER" id="PTHR10426:SF132">
    <property type="entry name" value="PROTEIN STRICTOSIDINE SYNTHASE-LIKE 12"/>
    <property type="match status" value="1"/>
</dbReference>
<dbReference type="PANTHER" id="PTHR10426">
    <property type="entry name" value="STRICTOSIDINE SYNTHASE-RELATED"/>
    <property type="match status" value="1"/>
</dbReference>
<dbReference type="Pfam" id="PF20067">
    <property type="entry name" value="SSL_N"/>
    <property type="match status" value="1"/>
</dbReference>
<dbReference type="Pfam" id="PF03088">
    <property type="entry name" value="Str_synth"/>
    <property type="match status" value="1"/>
</dbReference>
<dbReference type="SUPFAM" id="SSF63829">
    <property type="entry name" value="Calcium-dependent phosphotriesterase"/>
    <property type="match status" value="1"/>
</dbReference>
<sequence length="335" mass="35293">MTSFCSMISLLLLLSLSSAVFSDDASFQKLPVPETRSGPEAFAFDSTGKGFYTGVSGGKILKYLPETGYVDFAQITESSNSSWCDGTIGTALAGRCGRPAGIAFNEKTGDLYVADAPLGLHVISPAGGLATKITDSVDGKPFKFLDGLDVDPTTGVVYFTSFSSRFSPIQVLIALGLKDATGKLYKYDPSTKVVTVLMEGLSGSAGCAVSSDGSFVLVSQFTKSNIKRYWIKGPKAGSSEDFTNSVSNPDNIKRIGSTGNFWVASVVNKIIVPTNPSAVKVNSNGEVLQTIPLKDKFGDTLLSEVNEFEGNLYIGTLTGPFAGILKLEKGSCPAT</sequence>
<gene>
    <name evidence="5" type="primary">SSL12</name>
    <name type="synonym">SS1</name>
    <name evidence="6" type="synonym">SS13</name>
    <name evidence="8" type="ordered locus">At1g74020</name>
    <name evidence="9" type="ORF">F2P9.11</name>
</gene>
<evidence type="ECO:0000250" key="1"/>
<evidence type="ECO:0000255" key="2"/>
<evidence type="ECO:0000255" key="3">
    <source>
        <dbReference type="PROSITE-ProRule" id="PRU00498"/>
    </source>
</evidence>
<evidence type="ECO:0000269" key="4">
    <source>
    </source>
</evidence>
<evidence type="ECO:0000303" key="5">
    <source>
    </source>
</evidence>
<evidence type="ECO:0000303" key="6">
    <source>
    </source>
</evidence>
<evidence type="ECO:0000305" key="7"/>
<evidence type="ECO:0000312" key="8">
    <source>
        <dbReference type="Araport" id="AT1G74020"/>
    </source>
</evidence>
<evidence type="ECO:0000312" key="9">
    <source>
        <dbReference type="EMBL" id="AAG52513.1"/>
    </source>
</evidence>
<organism>
    <name type="scientific">Arabidopsis thaliana</name>
    <name type="common">Mouse-ear cress</name>
    <dbReference type="NCBI Taxonomy" id="3702"/>
    <lineage>
        <taxon>Eukaryota</taxon>
        <taxon>Viridiplantae</taxon>
        <taxon>Streptophyta</taxon>
        <taxon>Embryophyta</taxon>
        <taxon>Tracheophyta</taxon>
        <taxon>Spermatophyta</taxon>
        <taxon>Magnoliopsida</taxon>
        <taxon>eudicotyledons</taxon>
        <taxon>Gunneridae</taxon>
        <taxon>Pentapetalae</taxon>
        <taxon>rosids</taxon>
        <taxon>malvids</taxon>
        <taxon>Brassicales</taxon>
        <taxon>Brassicaceae</taxon>
        <taxon>Camelineae</taxon>
        <taxon>Arabidopsis</taxon>
    </lineage>
</organism>
<accession>P94111</accession>
<accession>Q9C9C3</accession>
<feature type="signal peptide" evidence="2">
    <location>
        <begin position="1"/>
        <end position="22"/>
    </location>
</feature>
<feature type="chain" id="PRO_0000033330" description="Protein STRICTOSIDINE SYNTHASE-LIKE 12">
    <location>
        <begin position="23"/>
        <end position="335"/>
    </location>
</feature>
<feature type="glycosylation site" description="N-linked (GlcNAc...) asparagine" evidence="3">
    <location>
        <position position="80"/>
    </location>
</feature>
<feature type="sequence conflict" description="In Ref. 1; AAB40594/AAB40593." evidence="7" ref="1">
    <original>A</original>
    <variation>P</variation>
    <location>
        <position position="19"/>
    </location>
</feature>
<feature type="sequence conflict" description="In Ref. 1; AAB40594/AAB40593." evidence="7" ref="1">
    <original>L</original>
    <variation>I</variation>
    <location>
        <position position="327"/>
    </location>
</feature>
<keyword id="KW-0017">Alkaloid metabolism</keyword>
<keyword id="KW-0325">Glycoprotein</keyword>
<keyword id="KW-0378">Hydrolase</keyword>
<keyword id="KW-1185">Reference proteome</keyword>
<keyword id="KW-0732">Signal</keyword>
<keyword id="KW-0926">Vacuole</keyword>
<name>SSL12_ARATH</name>
<comment type="function">
    <text evidence="1">Catalyzes the stereospecific condensation of tryptamine with secologanin to form strictosidine, the key intermediate of indole alkaloid biosynthesis.</text>
</comment>
<comment type="catalytic activity">
    <reaction>
        <text>3alpha(S)-strictosidine + H2O = secologanin + tryptamine</text>
        <dbReference type="Rhea" id="RHEA:15013"/>
        <dbReference type="ChEBI" id="CHEBI:15377"/>
        <dbReference type="ChEBI" id="CHEBI:18002"/>
        <dbReference type="ChEBI" id="CHEBI:57887"/>
        <dbReference type="ChEBI" id="CHEBI:58193"/>
        <dbReference type="EC" id="3.5.99.13"/>
    </reaction>
</comment>
<comment type="pathway">
    <text>Alkaloid biosynthesis; 3alpha(S)-strictosidine biosynthesis; 3alpha(S)-strictosidine from secologanin and tryptamine: step 1/1.</text>
</comment>
<comment type="subcellular location">
    <subcellularLocation>
        <location evidence="1">Vacuole</location>
    </subcellularLocation>
</comment>
<comment type="induction">
    <text evidence="4">Upon potassium (K) starvation.</text>
</comment>
<comment type="similarity">
    <text evidence="7">Belongs to the strictosidine synthase family.</text>
</comment>
<reference key="1">
    <citation type="submission" date="1995-12" db="EMBL/GenBank/DDBJ databases">
        <authorList>
            <person name="Jain A.K."/>
            <person name="Nessler C.L."/>
        </authorList>
    </citation>
    <scope>NUCLEOTIDE SEQUENCE [GENOMIC DNA / MRNA]</scope>
    <source>
        <strain>cv. Landsberg erecta</strain>
    </source>
</reference>
<reference key="2">
    <citation type="journal article" date="2000" name="Nature">
        <title>Sequence and analysis of chromosome 1 of the plant Arabidopsis thaliana.</title>
        <authorList>
            <person name="Theologis A."/>
            <person name="Ecker J.R."/>
            <person name="Palm C.J."/>
            <person name="Federspiel N.A."/>
            <person name="Kaul S."/>
            <person name="White O."/>
            <person name="Alonso J."/>
            <person name="Altafi H."/>
            <person name="Araujo R."/>
            <person name="Bowman C.L."/>
            <person name="Brooks S.Y."/>
            <person name="Buehler E."/>
            <person name="Chan A."/>
            <person name="Chao Q."/>
            <person name="Chen H."/>
            <person name="Cheuk R.F."/>
            <person name="Chin C.W."/>
            <person name="Chung M.K."/>
            <person name="Conn L."/>
            <person name="Conway A.B."/>
            <person name="Conway A.R."/>
            <person name="Creasy T.H."/>
            <person name="Dewar K."/>
            <person name="Dunn P."/>
            <person name="Etgu P."/>
            <person name="Feldblyum T.V."/>
            <person name="Feng J.-D."/>
            <person name="Fong B."/>
            <person name="Fujii C.Y."/>
            <person name="Gill J.E."/>
            <person name="Goldsmith A.D."/>
            <person name="Haas B."/>
            <person name="Hansen N.F."/>
            <person name="Hughes B."/>
            <person name="Huizar L."/>
            <person name="Hunter J.L."/>
            <person name="Jenkins J."/>
            <person name="Johnson-Hopson C."/>
            <person name="Khan S."/>
            <person name="Khaykin E."/>
            <person name="Kim C.J."/>
            <person name="Koo H.L."/>
            <person name="Kremenetskaia I."/>
            <person name="Kurtz D.B."/>
            <person name="Kwan A."/>
            <person name="Lam B."/>
            <person name="Langin-Hooper S."/>
            <person name="Lee A."/>
            <person name="Lee J.M."/>
            <person name="Lenz C.A."/>
            <person name="Li J.H."/>
            <person name="Li Y.-P."/>
            <person name="Lin X."/>
            <person name="Liu S.X."/>
            <person name="Liu Z.A."/>
            <person name="Luros J.S."/>
            <person name="Maiti R."/>
            <person name="Marziali A."/>
            <person name="Militscher J."/>
            <person name="Miranda M."/>
            <person name="Nguyen M."/>
            <person name="Nierman W.C."/>
            <person name="Osborne B.I."/>
            <person name="Pai G."/>
            <person name="Peterson J."/>
            <person name="Pham P.K."/>
            <person name="Rizzo M."/>
            <person name="Rooney T."/>
            <person name="Rowley D."/>
            <person name="Sakano H."/>
            <person name="Salzberg S.L."/>
            <person name="Schwartz J.R."/>
            <person name="Shinn P."/>
            <person name="Southwick A.M."/>
            <person name="Sun H."/>
            <person name="Tallon L.J."/>
            <person name="Tambunga G."/>
            <person name="Toriumi M.J."/>
            <person name="Town C.D."/>
            <person name="Utterback T."/>
            <person name="Van Aken S."/>
            <person name="Vaysberg M."/>
            <person name="Vysotskaia V.S."/>
            <person name="Walker M."/>
            <person name="Wu D."/>
            <person name="Yu G."/>
            <person name="Fraser C.M."/>
            <person name="Venter J.C."/>
            <person name="Davis R.W."/>
        </authorList>
    </citation>
    <scope>NUCLEOTIDE SEQUENCE [LARGE SCALE GENOMIC DNA]</scope>
    <source>
        <strain>cv. Columbia</strain>
    </source>
</reference>
<reference key="3">
    <citation type="journal article" date="2017" name="Plant J.">
        <title>Araport11: a complete reannotation of the Arabidopsis thaliana reference genome.</title>
        <authorList>
            <person name="Cheng C.Y."/>
            <person name="Krishnakumar V."/>
            <person name="Chan A.P."/>
            <person name="Thibaud-Nissen F."/>
            <person name="Schobel S."/>
            <person name="Town C.D."/>
        </authorList>
    </citation>
    <scope>GENOME REANNOTATION</scope>
    <source>
        <strain>cv. Columbia</strain>
    </source>
</reference>
<reference key="4">
    <citation type="journal article" date="2003" name="Science">
        <title>Empirical analysis of transcriptional activity in the Arabidopsis genome.</title>
        <authorList>
            <person name="Yamada K."/>
            <person name="Lim J."/>
            <person name="Dale J.M."/>
            <person name="Chen H."/>
            <person name="Shinn P."/>
            <person name="Palm C.J."/>
            <person name="Southwick A.M."/>
            <person name="Wu H.C."/>
            <person name="Kim C.J."/>
            <person name="Nguyen M."/>
            <person name="Pham P.K."/>
            <person name="Cheuk R.F."/>
            <person name="Karlin-Newmann G."/>
            <person name="Liu S.X."/>
            <person name="Lam B."/>
            <person name="Sakano H."/>
            <person name="Wu T."/>
            <person name="Yu G."/>
            <person name="Miranda M."/>
            <person name="Quach H.L."/>
            <person name="Tripp M."/>
            <person name="Chang C.H."/>
            <person name="Lee J.M."/>
            <person name="Toriumi M.J."/>
            <person name="Chan M.M."/>
            <person name="Tang C.C."/>
            <person name="Onodera C.S."/>
            <person name="Deng J.M."/>
            <person name="Akiyama K."/>
            <person name="Ansari Y."/>
            <person name="Arakawa T."/>
            <person name="Banh J."/>
            <person name="Banno F."/>
            <person name="Bowser L."/>
            <person name="Brooks S.Y."/>
            <person name="Carninci P."/>
            <person name="Chao Q."/>
            <person name="Choy N."/>
            <person name="Enju A."/>
            <person name="Goldsmith A.D."/>
            <person name="Gurjal M."/>
            <person name="Hansen N.F."/>
            <person name="Hayashizaki Y."/>
            <person name="Johnson-Hopson C."/>
            <person name="Hsuan V.W."/>
            <person name="Iida K."/>
            <person name="Karnes M."/>
            <person name="Khan S."/>
            <person name="Koesema E."/>
            <person name="Ishida J."/>
            <person name="Jiang P.X."/>
            <person name="Jones T."/>
            <person name="Kawai J."/>
            <person name="Kamiya A."/>
            <person name="Meyers C."/>
            <person name="Nakajima M."/>
            <person name="Narusaka M."/>
            <person name="Seki M."/>
            <person name="Sakurai T."/>
            <person name="Satou M."/>
            <person name="Tamse R."/>
            <person name="Vaysberg M."/>
            <person name="Wallender E.K."/>
            <person name="Wong C."/>
            <person name="Yamamura Y."/>
            <person name="Yuan S."/>
            <person name="Shinozaki K."/>
            <person name="Davis R.W."/>
            <person name="Theologis A."/>
            <person name="Ecker J.R."/>
        </authorList>
    </citation>
    <scope>NUCLEOTIDE SEQUENCE [LARGE SCALE MRNA]</scope>
    <source>
        <strain>cv. Columbia</strain>
    </source>
</reference>
<reference key="5">
    <citation type="journal article" date="2000" name="Biochem. Biophys. Res. Commun.">
        <title>Animal and plant members of a gene family with similarity to alkaloid-synthesizing enzymes.</title>
        <authorList>
            <person name="Fabbri M."/>
            <person name="Delp G."/>
            <person name="Schmidt O."/>
            <person name="Theopold U."/>
        </authorList>
    </citation>
    <scope>GENE FAMILY</scope>
    <scope>NOMENCLATURE</scope>
</reference>
<reference key="6">
    <citation type="journal article" date="2004" name="Plant Physiol.">
        <title>Cesium toxicity in Arabidopsis.</title>
        <authorList>
            <person name="Hampton C.R."/>
            <person name="Bowen H.C."/>
            <person name="Broadley M.R."/>
            <person name="Hammond J.P."/>
            <person name="Mead A."/>
            <person name="Payne K.A."/>
            <person name="Pritchard J."/>
            <person name="White P.J."/>
        </authorList>
    </citation>
    <scope>INDUCTION BY POTASSIUM STARVATION</scope>
    <source>
        <strain>cv. Wassilewskija-2</strain>
    </source>
</reference>
<reference key="7">
    <citation type="journal article" date="2009" name="Plant Biol.">
        <title>Phylogenetic and transcriptional analysis of a strictosidine synthase-like gene family in Arabidopsis thaliana reveals involvement in plant defence responses.</title>
        <authorList>
            <person name="Sohani M.M."/>
            <person name="Schenk P.M."/>
            <person name="Schultz C.J."/>
            <person name="Schmidt O."/>
        </authorList>
    </citation>
    <scope>GENE FAMILY</scope>
    <source>
        <strain>cv. Columbia</strain>
    </source>
</reference>